<sequence>MAKYKALASLRYLACLVFLPWGISISFQKGLEPWVTNWWNTGQSREFSDYLQEENALERFGEIEELFLLERMVEDSSETHSQDLRIEIRKKTIQLVEMYNEDLIQIISHLLANFICFATPGAYFILGKEKLVVLNSWIQELFHSLSDTMKAFSILLVTDLCIGFHSPHGWELMIDSISENYGFSHDEQRISGLVSTFPVISDTIFKYWIFRHLNRISPSLVVIYHSMNE</sequence>
<name>CEMA_CYCTA</name>
<protein>
    <recommendedName>
        <fullName evidence="1">Potassium/proton antiporter CemA</fullName>
    </recommendedName>
    <alternativeName>
        <fullName evidence="1">Chloroplast envelope membrane protein A</fullName>
        <shortName evidence="1">CemA</shortName>
    </alternativeName>
</protein>
<feature type="chain" id="PRO_0000323242" description="Potassium/proton antiporter CemA">
    <location>
        <begin position="1"/>
        <end position="229"/>
    </location>
</feature>
<feature type="transmembrane region" description="Helical" evidence="1">
    <location>
        <begin position="7"/>
        <end position="27"/>
    </location>
</feature>
<feature type="transmembrane region" description="Helical" evidence="1">
    <location>
        <begin position="106"/>
        <end position="126"/>
    </location>
</feature>
<geneLocation type="chloroplast"/>
<proteinExistence type="inferred from homology"/>
<organism>
    <name type="scientific">Cycas taitungensis</name>
    <name type="common">Prince sago</name>
    <name type="synonym">Cycas taiwaniana</name>
    <dbReference type="NCBI Taxonomy" id="54799"/>
    <lineage>
        <taxon>Eukaryota</taxon>
        <taxon>Viridiplantae</taxon>
        <taxon>Streptophyta</taxon>
        <taxon>Embryophyta</taxon>
        <taxon>Tracheophyta</taxon>
        <taxon>Spermatophyta</taxon>
        <taxon>Cycadidae</taxon>
        <taxon>Cycadales</taxon>
        <taxon>Cycadaceae</taxon>
        <taxon>Cycas</taxon>
    </lineage>
</organism>
<comment type="function">
    <text evidence="1">Contributes to K(+)/H(+) antiport activity by supporting proton efflux to control proton extrusion and homeostasis in chloroplasts in a light-dependent manner to modulate photosynthesis. Prevents excessive induction of non-photochemical quenching (NPQ) under continuous-light conditions. Indirectly promotes efficient inorganic carbon uptake into chloroplasts.</text>
</comment>
<comment type="catalytic activity">
    <reaction evidence="1">
        <text>K(+)(in) + H(+)(out) = K(+)(out) + H(+)(in)</text>
        <dbReference type="Rhea" id="RHEA:29467"/>
        <dbReference type="ChEBI" id="CHEBI:15378"/>
        <dbReference type="ChEBI" id="CHEBI:29103"/>
    </reaction>
</comment>
<comment type="subcellular location">
    <subcellularLocation>
        <location evidence="1">Plastid</location>
        <location evidence="1">Chloroplast inner membrane</location>
        <topology evidence="1">Multi-pass membrane protein</topology>
    </subcellularLocation>
</comment>
<comment type="similarity">
    <text evidence="1 2">Belongs to the CemA family.</text>
</comment>
<keyword id="KW-0050">Antiport</keyword>
<keyword id="KW-0150">Chloroplast</keyword>
<keyword id="KW-0375">Hydrogen ion transport</keyword>
<keyword id="KW-0406">Ion transport</keyword>
<keyword id="KW-0472">Membrane</keyword>
<keyword id="KW-0934">Plastid</keyword>
<keyword id="KW-1001">Plastid inner membrane</keyword>
<keyword id="KW-0630">Potassium</keyword>
<keyword id="KW-0633">Potassium transport</keyword>
<keyword id="KW-0812">Transmembrane</keyword>
<keyword id="KW-1133">Transmembrane helix</keyword>
<keyword id="KW-0813">Transport</keyword>
<evidence type="ECO:0000255" key="1">
    <source>
        <dbReference type="HAMAP-Rule" id="MF_01308"/>
    </source>
</evidence>
<evidence type="ECO:0000305" key="2"/>
<accession>A6H5J0</accession>
<gene>
    <name evidence="1" type="primary">cemA</name>
</gene>
<dbReference type="EMBL" id="AP009339">
    <property type="protein sequence ID" value="BAF64956.1"/>
    <property type="molecule type" value="Genomic_DNA"/>
</dbReference>
<dbReference type="RefSeq" id="YP_001312215.1">
    <property type="nucleotide sequence ID" value="NC_009618.1"/>
</dbReference>
<dbReference type="GeneID" id="5309565"/>
<dbReference type="GO" id="GO:0009706">
    <property type="term" value="C:chloroplast inner membrane"/>
    <property type="evidence" value="ECO:0007669"/>
    <property type="project" value="UniProtKB-SubCell"/>
</dbReference>
<dbReference type="GO" id="GO:0015297">
    <property type="term" value="F:antiporter activity"/>
    <property type="evidence" value="ECO:0007669"/>
    <property type="project" value="UniProtKB-KW"/>
</dbReference>
<dbReference type="GO" id="GO:0015078">
    <property type="term" value="F:proton transmembrane transporter activity"/>
    <property type="evidence" value="ECO:0007669"/>
    <property type="project" value="UniProtKB-UniRule"/>
</dbReference>
<dbReference type="GO" id="GO:0006813">
    <property type="term" value="P:potassium ion transport"/>
    <property type="evidence" value="ECO:0007669"/>
    <property type="project" value="UniProtKB-UniRule"/>
</dbReference>
<dbReference type="HAMAP" id="MF_01308">
    <property type="entry name" value="CemA_PxcA"/>
    <property type="match status" value="1"/>
</dbReference>
<dbReference type="InterPro" id="IPR004282">
    <property type="entry name" value="CemA"/>
</dbReference>
<dbReference type="PANTHER" id="PTHR33650:SF2">
    <property type="entry name" value="CHLOROPLAST ENVELOPE MEMBRANE PROTEIN"/>
    <property type="match status" value="1"/>
</dbReference>
<dbReference type="PANTHER" id="PTHR33650">
    <property type="entry name" value="CHLOROPLAST ENVELOPE MEMBRANE PROTEIN-RELATED"/>
    <property type="match status" value="1"/>
</dbReference>
<dbReference type="Pfam" id="PF03040">
    <property type="entry name" value="CemA"/>
    <property type="match status" value="1"/>
</dbReference>
<reference key="1">
    <citation type="journal article" date="2007" name="Mol. Biol. Evol.">
        <title>Chloroplast genome (cpDNA) of Cycas taitungensis and 56 cp protein-coding genes of Gnetum parvifolium: insights into cpDNA evolution and phylogeny of extant seed plants.</title>
        <authorList>
            <person name="Wu C.-S."/>
            <person name="Wang Y.-N."/>
            <person name="Liu S.-M."/>
            <person name="Chaw S.-M."/>
        </authorList>
    </citation>
    <scope>NUCLEOTIDE SEQUENCE [LARGE SCALE GENOMIC DNA]</scope>
</reference>